<name>PPNP_YERPA</name>
<feature type="chain" id="PRO_0000298736" description="Pyrimidine/purine nucleoside phosphorylase">
    <location>
        <begin position="1"/>
        <end position="95"/>
    </location>
</feature>
<evidence type="ECO:0000255" key="1">
    <source>
        <dbReference type="HAMAP-Rule" id="MF_01537"/>
    </source>
</evidence>
<protein>
    <recommendedName>
        <fullName evidence="1">Pyrimidine/purine nucleoside phosphorylase</fullName>
        <ecNumber evidence="1">2.4.2.1</ecNumber>
        <ecNumber evidence="1">2.4.2.2</ecNumber>
    </recommendedName>
    <alternativeName>
        <fullName evidence="1">Adenosine phosphorylase</fullName>
    </alternativeName>
    <alternativeName>
        <fullName evidence="1">Cytidine phosphorylase</fullName>
    </alternativeName>
    <alternativeName>
        <fullName evidence="1">Guanosine phosphorylase</fullName>
    </alternativeName>
    <alternativeName>
        <fullName evidence="1">Inosine phosphorylase</fullName>
    </alternativeName>
    <alternativeName>
        <fullName evidence="1">Thymidine phosphorylase</fullName>
    </alternativeName>
    <alternativeName>
        <fullName evidence="1">Uridine phosphorylase</fullName>
    </alternativeName>
    <alternativeName>
        <fullName evidence="1">Xanthosine phosphorylase</fullName>
    </alternativeName>
</protein>
<accession>Q1C4F4</accession>
<reference key="1">
    <citation type="journal article" date="2006" name="J. Bacteriol.">
        <title>Complete genome sequence of Yersinia pestis strains Antiqua and Nepal516: evidence of gene reduction in an emerging pathogen.</title>
        <authorList>
            <person name="Chain P.S.G."/>
            <person name="Hu P."/>
            <person name="Malfatti S.A."/>
            <person name="Radnedge L."/>
            <person name="Larimer F."/>
            <person name="Vergez L.M."/>
            <person name="Worsham P."/>
            <person name="Chu M.C."/>
            <person name="Andersen G.L."/>
        </authorList>
    </citation>
    <scope>NUCLEOTIDE SEQUENCE [LARGE SCALE GENOMIC DNA]</scope>
    <source>
        <strain>Antiqua</strain>
    </source>
</reference>
<keyword id="KW-0328">Glycosyltransferase</keyword>
<keyword id="KW-0808">Transferase</keyword>
<comment type="function">
    <text evidence="1">Catalyzes the phosphorolysis of diverse nucleosides, yielding D-ribose 1-phosphate and the respective free bases. Can use uridine, adenosine, guanosine, cytidine, thymidine, inosine and xanthosine as substrates. Also catalyzes the reverse reactions.</text>
</comment>
<comment type="catalytic activity">
    <reaction evidence="1">
        <text>a purine D-ribonucleoside + phosphate = a purine nucleobase + alpha-D-ribose 1-phosphate</text>
        <dbReference type="Rhea" id="RHEA:19805"/>
        <dbReference type="ChEBI" id="CHEBI:26386"/>
        <dbReference type="ChEBI" id="CHEBI:43474"/>
        <dbReference type="ChEBI" id="CHEBI:57720"/>
        <dbReference type="ChEBI" id="CHEBI:142355"/>
        <dbReference type="EC" id="2.4.2.1"/>
    </reaction>
</comment>
<comment type="catalytic activity">
    <reaction evidence="1">
        <text>adenosine + phosphate = alpha-D-ribose 1-phosphate + adenine</text>
        <dbReference type="Rhea" id="RHEA:27642"/>
        <dbReference type="ChEBI" id="CHEBI:16335"/>
        <dbReference type="ChEBI" id="CHEBI:16708"/>
        <dbReference type="ChEBI" id="CHEBI:43474"/>
        <dbReference type="ChEBI" id="CHEBI:57720"/>
        <dbReference type="EC" id="2.4.2.1"/>
    </reaction>
</comment>
<comment type="catalytic activity">
    <reaction evidence="1">
        <text>cytidine + phosphate = cytosine + alpha-D-ribose 1-phosphate</text>
        <dbReference type="Rhea" id="RHEA:52540"/>
        <dbReference type="ChEBI" id="CHEBI:16040"/>
        <dbReference type="ChEBI" id="CHEBI:17562"/>
        <dbReference type="ChEBI" id="CHEBI:43474"/>
        <dbReference type="ChEBI" id="CHEBI:57720"/>
        <dbReference type="EC" id="2.4.2.2"/>
    </reaction>
</comment>
<comment type="catalytic activity">
    <reaction evidence="1">
        <text>guanosine + phosphate = alpha-D-ribose 1-phosphate + guanine</text>
        <dbReference type="Rhea" id="RHEA:13233"/>
        <dbReference type="ChEBI" id="CHEBI:16235"/>
        <dbReference type="ChEBI" id="CHEBI:16750"/>
        <dbReference type="ChEBI" id="CHEBI:43474"/>
        <dbReference type="ChEBI" id="CHEBI:57720"/>
        <dbReference type="EC" id="2.4.2.1"/>
    </reaction>
</comment>
<comment type="catalytic activity">
    <reaction evidence="1">
        <text>inosine + phosphate = alpha-D-ribose 1-phosphate + hypoxanthine</text>
        <dbReference type="Rhea" id="RHEA:27646"/>
        <dbReference type="ChEBI" id="CHEBI:17368"/>
        <dbReference type="ChEBI" id="CHEBI:17596"/>
        <dbReference type="ChEBI" id="CHEBI:43474"/>
        <dbReference type="ChEBI" id="CHEBI:57720"/>
        <dbReference type="EC" id="2.4.2.1"/>
    </reaction>
</comment>
<comment type="catalytic activity">
    <reaction evidence="1">
        <text>thymidine + phosphate = 2-deoxy-alpha-D-ribose 1-phosphate + thymine</text>
        <dbReference type="Rhea" id="RHEA:16037"/>
        <dbReference type="ChEBI" id="CHEBI:17748"/>
        <dbReference type="ChEBI" id="CHEBI:17821"/>
        <dbReference type="ChEBI" id="CHEBI:43474"/>
        <dbReference type="ChEBI" id="CHEBI:57259"/>
        <dbReference type="EC" id="2.4.2.2"/>
    </reaction>
</comment>
<comment type="catalytic activity">
    <reaction evidence="1">
        <text>uridine + phosphate = alpha-D-ribose 1-phosphate + uracil</text>
        <dbReference type="Rhea" id="RHEA:24388"/>
        <dbReference type="ChEBI" id="CHEBI:16704"/>
        <dbReference type="ChEBI" id="CHEBI:17568"/>
        <dbReference type="ChEBI" id="CHEBI:43474"/>
        <dbReference type="ChEBI" id="CHEBI:57720"/>
        <dbReference type="EC" id="2.4.2.2"/>
    </reaction>
</comment>
<comment type="catalytic activity">
    <reaction evidence="1">
        <text>xanthosine + phosphate = alpha-D-ribose 1-phosphate + xanthine</text>
        <dbReference type="Rhea" id="RHEA:27638"/>
        <dbReference type="ChEBI" id="CHEBI:17712"/>
        <dbReference type="ChEBI" id="CHEBI:18107"/>
        <dbReference type="ChEBI" id="CHEBI:43474"/>
        <dbReference type="ChEBI" id="CHEBI:57720"/>
        <dbReference type="EC" id="2.4.2.1"/>
    </reaction>
</comment>
<comment type="similarity">
    <text evidence="1">Belongs to the nucleoside phosphorylase PpnP family.</text>
</comment>
<sequence length="95" mass="10427">MLKFNEYFTGKVKSIGFDSDSIGPASVGVMEKGEYTFSTAKAEEMTVITGSLKVLIPGSPDWQTFMPGETFYIPGESEFNLQVAEASSYLCKYLS</sequence>
<gene>
    <name evidence="1" type="primary">ppnP</name>
    <name type="ordered locus">YPA_2706</name>
</gene>
<proteinExistence type="inferred from homology"/>
<organism>
    <name type="scientific">Yersinia pestis bv. Antiqua (strain Antiqua)</name>
    <dbReference type="NCBI Taxonomy" id="360102"/>
    <lineage>
        <taxon>Bacteria</taxon>
        <taxon>Pseudomonadati</taxon>
        <taxon>Pseudomonadota</taxon>
        <taxon>Gammaproteobacteria</taxon>
        <taxon>Enterobacterales</taxon>
        <taxon>Yersiniaceae</taxon>
        <taxon>Yersinia</taxon>
    </lineage>
</organism>
<dbReference type="EC" id="2.4.2.1" evidence="1"/>
<dbReference type="EC" id="2.4.2.2" evidence="1"/>
<dbReference type="EMBL" id="CP000308">
    <property type="protein sequence ID" value="ABG14668.1"/>
    <property type="molecule type" value="Genomic_DNA"/>
</dbReference>
<dbReference type="RefSeq" id="WP_002208692.1">
    <property type="nucleotide sequence ID" value="NZ_CP009906.1"/>
</dbReference>
<dbReference type="SMR" id="Q1C4F4"/>
<dbReference type="GeneID" id="57975503"/>
<dbReference type="KEGG" id="ypa:YPA_2706"/>
<dbReference type="Proteomes" id="UP000001971">
    <property type="component" value="Chromosome"/>
</dbReference>
<dbReference type="GO" id="GO:0005829">
    <property type="term" value="C:cytosol"/>
    <property type="evidence" value="ECO:0007669"/>
    <property type="project" value="TreeGrafter"/>
</dbReference>
<dbReference type="GO" id="GO:0047975">
    <property type="term" value="F:guanosine phosphorylase activity"/>
    <property type="evidence" value="ECO:0007669"/>
    <property type="project" value="UniProtKB-EC"/>
</dbReference>
<dbReference type="GO" id="GO:0004731">
    <property type="term" value="F:purine-nucleoside phosphorylase activity"/>
    <property type="evidence" value="ECO:0007669"/>
    <property type="project" value="UniProtKB-UniRule"/>
</dbReference>
<dbReference type="GO" id="GO:0009032">
    <property type="term" value="F:thymidine phosphorylase activity"/>
    <property type="evidence" value="ECO:0007669"/>
    <property type="project" value="UniProtKB-EC"/>
</dbReference>
<dbReference type="GO" id="GO:0004850">
    <property type="term" value="F:uridine phosphorylase activity"/>
    <property type="evidence" value="ECO:0007669"/>
    <property type="project" value="UniProtKB-EC"/>
</dbReference>
<dbReference type="FunFam" id="2.60.120.10:FF:000016">
    <property type="entry name" value="Pyrimidine/purine nucleoside phosphorylase"/>
    <property type="match status" value="1"/>
</dbReference>
<dbReference type="Gene3D" id="2.60.120.10">
    <property type="entry name" value="Jelly Rolls"/>
    <property type="match status" value="1"/>
</dbReference>
<dbReference type="HAMAP" id="MF_01537">
    <property type="entry name" value="Nucleos_phosphorylase_PpnP"/>
    <property type="match status" value="1"/>
</dbReference>
<dbReference type="InterPro" id="IPR009664">
    <property type="entry name" value="Ppnp"/>
</dbReference>
<dbReference type="InterPro" id="IPR014710">
    <property type="entry name" value="RmlC-like_jellyroll"/>
</dbReference>
<dbReference type="InterPro" id="IPR011051">
    <property type="entry name" value="RmlC_Cupin_sf"/>
</dbReference>
<dbReference type="NCBIfam" id="NF007875">
    <property type="entry name" value="PRK10579.1"/>
    <property type="match status" value="1"/>
</dbReference>
<dbReference type="PANTHER" id="PTHR36540">
    <property type="entry name" value="PYRIMIDINE/PURINE NUCLEOSIDE PHOSPHORYLASE"/>
    <property type="match status" value="1"/>
</dbReference>
<dbReference type="PANTHER" id="PTHR36540:SF1">
    <property type="entry name" value="PYRIMIDINE_PURINE NUCLEOSIDE PHOSPHORYLASE"/>
    <property type="match status" value="1"/>
</dbReference>
<dbReference type="Pfam" id="PF06865">
    <property type="entry name" value="Ppnp"/>
    <property type="match status" value="1"/>
</dbReference>
<dbReference type="SUPFAM" id="SSF51182">
    <property type="entry name" value="RmlC-like cupins"/>
    <property type="match status" value="1"/>
</dbReference>